<evidence type="ECO:0000255" key="1"/>
<evidence type="ECO:0000305" key="2"/>
<reference key="1">
    <citation type="journal article" date="1997" name="Nature">
        <title>The complete genome sequence of the Gram-positive bacterium Bacillus subtilis.</title>
        <authorList>
            <person name="Kunst F."/>
            <person name="Ogasawara N."/>
            <person name="Moszer I."/>
            <person name="Albertini A.M."/>
            <person name="Alloni G."/>
            <person name="Azevedo V."/>
            <person name="Bertero M.G."/>
            <person name="Bessieres P."/>
            <person name="Bolotin A."/>
            <person name="Borchert S."/>
            <person name="Borriss R."/>
            <person name="Boursier L."/>
            <person name="Brans A."/>
            <person name="Braun M."/>
            <person name="Brignell S.C."/>
            <person name="Bron S."/>
            <person name="Brouillet S."/>
            <person name="Bruschi C.V."/>
            <person name="Caldwell B."/>
            <person name="Capuano V."/>
            <person name="Carter N.M."/>
            <person name="Choi S.-K."/>
            <person name="Codani J.-J."/>
            <person name="Connerton I.F."/>
            <person name="Cummings N.J."/>
            <person name="Daniel R.A."/>
            <person name="Denizot F."/>
            <person name="Devine K.M."/>
            <person name="Duesterhoeft A."/>
            <person name="Ehrlich S.D."/>
            <person name="Emmerson P.T."/>
            <person name="Entian K.-D."/>
            <person name="Errington J."/>
            <person name="Fabret C."/>
            <person name="Ferrari E."/>
            <person name="Foulger D."/>
            <person name="Fritz C."/>
            <person name="Fujita M."/>
            <person name="Fujita Y."/>
            <person name="Fuma S."/>
            <person name="Galizzi A."/>
            <person name="Galleron N."/>
            <person name="Ghim S.-Y."/>
            <person name="Glaser P."/>
            <person name="Goffeau A."/>
            <person name="Golightly E.J."/>
            <person name="Grandi G."/>
            <person name="Guiseppi G."/>
            <person name="Guy B.J."/>
            <person name="Haga K."/>
            <person name="Haiech J."/>
            <person name="Harwood C.R."/>
            <person name="Henaut A."/>
            <person name="Hilbert H."/>
            <person name="Holsappel S."/>
            <person name="Hosono S."/>
            <person name="Hullo M.-F."/>
            <person name="Itaya M."/>
            <person name="Jones L.-M."/>
            <person name="Joris B."/>
            <person name="Karamata D."/>
            <person name="Kasahara Y."/>
            <person name="Klaerr-Blanchard M."/>
            <person name="Klein C."/>
            <person name="Kobayashi Y."/>
            <person name="Koetter P."/>
            <person name="Koningstein G."/>
            <person name="Krogh S."/>
            <person name="Kumano M."/>
            <person name="Kurita K."/>
            <person name="Lapidus A."/>
            <person name="Lardinois S."/>
            <person name="Lauber J."/>
            <person name="Lazarevic V."/>
            <person name="Lee S.-M."/>
            <person name="Levine A."/>
            <person name="Liu H."/>
            <person name="Masuda S."/>
            <person name="Mauel C."/>
            <person name="Medigue C."/>
            <person name="Medina N."/>
            <person name="Mellado R.P."/>
            <person name="Mizuno M."/>
            <person name="Moestl D."/>
            <person name="Nakai S."/>
            <person name="Noback M."/>
            <person name="Noone D."/>
            <person name="O'Reilly M."/>
            <person name="Ogawa K."/>
            <person name="Ogiwara A."/>
            <person name="Oudega B."/>
            <person name="Park S.-H."/>
            <person name="Parro V."/>
            <person name="Pohl T.M."/>
            <person name="Portetelle D."/>
            <person name="Porwollik S."/>
            <person name="Prescott A.M."/>
            <person name="Presecan E."/>
            <person name="Pujic P."/>
            <person name="Purnelle B."/>
            <person name="Rapoport G."/>
            <person name="Rey M."/>
            <person name="Reynolds S."/>
            <person name="Rieger M."/>
            <person name="Rivolta C."/>
            <person name="Rocha E."/>
            <person name="Roche B."/>
            <person name="Rose M."/>
            <person name="Sadaie Y."/>
            <person name="Sato T."/>
            <person name="Scanlan E."/>
            <person name="Schleich S."/>
            <person name="Schroeter R."/>
            <person name="Scoffone F."/>
            <person name="Sekiguchi J."/>
            <person name="Sekowska A."/>
            <person name="Seror S.J."/>
            <person name="Serror P."/>
            <person name="Shin B.-S."/>
            <person name="Soldo B."/>
            <person name="Sorokin A."/>
            <person name="Tacconi E."/>
            <person name="Takagi T."/>
            <person name="Takahashi H."/>
            <person name="Takemaru K."/>
            <person name="Takeuchi M."/>
            <person name="Tamakoshi A."/>
            <person name="Tanaka T."/>
            <person name="Terpstra P."/>
            <person name="Tognoni A."/>
            <person name="Tosato V."/>
            <person name="Uchiyama S."/>
            <person name="Vandenbol M."/>
            <person name="Vannier F."/>
            <person name="Vassarotti A."/>
            <person name="Viari A."/>
            <person name="Wambutt R."/>
            <person name="Wedler E."/>
            <person name="Wedler H."/>
            <person name="Weitzenegger T."/>
            <person name="Winters P."/>
            <person name="Wipat A."/>
            <person name="Yamamoto H."/>
            <person name="Yamane K."/>
            <person name="Yasumoto K."/>
            <person name="Yata K."/>
            <person name="Yoshida K."/>
            <person name="Yoshikawa H.-F."/>
            <person name="Zumstein E."/>
            <person name="Yoshikawa H."/>
            <person name="Danchin A."/>
        </authorList>
    </citation>
    <scope>NUCLEOTIDE SEQUENCE [LARGE SCALE GENOMIC DNA]</scope>
    <source>
        <strain>168</strain>
    </source>
</reference>
<sequence length="324" mass="35532">MYSGNKVVISWIVSIGFVGMPEFMSSKTFALCRQRSFLHGPAGIRSDEEKENNFFGRVSFMDAALLLEYGWVLLVLIGLEGILAADNALVMAVMVKHLPEEKRKKALFYGLAGAFVLRFGSLFAISFLVNVWQVQAIGAIYLLYISASHLLKRYVFKKEDTHKETKQSGFWPTVLKVELADIAFAVDSILAAVALAVTLPGTSLPKIGGLDGGQFLVILAGGIIGLVIMRFAASMFVKLLKERPSLETAAFVIVGWVGVKLALYTLAHRDIAVVSEHFIHSGTWKLIFWGVLAAIAVCGWFMSGGKKQPEGAQNEQKNSTRERA</sequence>
<proteinExistence type="inferred from homology"/>
<keyword id="KW-1003">Cell membrane</keyword>
<keyword id="KW-0472">Membrane</keyword>
<keyword id="KW-1185">Reference proteome</keyword>
<keyword id="KW-0812">Transmembrane</keyword>
<keyword id="KW-1133">Transmembrane helix</keyword>
<protein>
    <recommendedName>
        <fullName>Uncharacterized membrane protein YkoY</fullName>
    </recommendedName>
</protein>
<name>YKOY_BACSU</name>
<comment type="subcellular location">
    <subcellularLocation>
        <location evidence="2">Cell membrane</location>
        <topology evidence="2">Multi-pass membrane protein</topology>
    </subcellularLocation>
</comment>
<comment type="similarity">
    <text evidence="2">Belongs to the TerC family.</text>
</comment>
<accession>O34997</accession>
<feature type="chain" id="PRO_0000377720" description="Uncharacterized membrane protein YkoY">
    <location>
        <begin position="1"/>
        <end position="324"/>
    </location>
</feature>
<feature type="transmembrane region" description="Helical" evidence="1">
    <location>
        <begin position="4"/>
        <end position="24"/>
    </location>
</feature>
<feature type="transmembrane region" description="Helical" evidence="1">
    <location>
        <begin position="63"/>
        <end position="83"/>
    </location>
</feature>
<feature type="transmembrane region" description="Helical" evidence="1">
    <location>
        <begin position="106"/>
        <end position="128"/>
    </location>
</feature>
<feature type="transmembrane region" description="Helical" evidence="1">
    <location>
        <begin position="132"/>
        <end position="151"/>
    </location>
</feature>
<feature type="transmembrane region" description="Helical" evidence="1">
    <location>
        <begin position="179"/>
        <end position="199"/>
    </location>
</feature>
<feature type="transmembrane region" description="Helical" evidence="1">
    <location>
        <begin position="209"/>
        <end position="229"/>
    </location>
</feature>
<feature type="transmembrane region" description="Helical" evidence="1">
    <location>
        <begin position="246"/>
        <end position="266"/>
    </location>
</feature>
<feature type="transmembrane region" description="Helical" evidence="1">
    <location>
        <begin position="282"/>
        <end position="302"/>
    </location>
</feature>
<dbReference type="EMBL" id="AL009126">
    <property type="protein sequence ID" value="CAB13201.1"/>
    <property type="molecule type" value="Genomic_DNA"/>
</dbReference>
<dbReference type="PIR" id="C69861">
    <property type="entry name" value="C69861"/>
</dbReference>
<dbReference type="RefSeq" id="NP_389227.1">
    <property type="nucleotide sequence ID" value="NC_000964.3"/>
</dbReference>
<dbReference type="RefSeq" id="WP_009967096.1">
    <property type="nucleotide sequence ID" value="NZ_OZ025638.1"/>
</dbReference>
<dbReference type="FunCoup" id="O34997">
    <property type="interactions" value="352"/>
</dbReference>
<dbReference type="STRING" id="224308.BSU13440"/>
<dbReference type="TCDB" id="2.A.109.1.4">
    <property type="family name" value="the tellurium ion resistance (terc) family"/>
</dbReference>
<dbReference type="PaxDb" id="224308-BSU13440"/>
<dbReference type="EnsemblBacteria" id="CAB13201">
    <property type="protein sequence ID" value="CAB13201"/>
    <property type="gene ID" value="BSU_13440"/>
</dbReference>
<dbReference type="GeneID" id="939368"/>
<dbReference type="KEGG" id="bsu:BSU13440"/>
<dbReference type="PATRIC" id="fig|224308.43.peg.1418"/>
<dbReference type="eggNOG" id="COG0861">
    <property type="taxonomic scope" value="Bacteria"/>
</dbReference>
<dbReference type="InParanoid" id="O34997"/>
<dbReference type="OrthoDB" id="9806211at2"/>
<dbReference type="PhylomeDB" id="O34997"/>
<dbReference type="BioCyc" id="BSUB:BSU13440-MONOMER"/>
<dbReference type="Proteomes" id="UP000001570">
    <property type="component" value="Chromosome"/>
</dbReference>
<dbReference type="GO" id="GO:0005886">
    <property type="term" value="C:plasma membrane"/>
    <property type="evidence" value="ECO:0007669"/>
    <property type="project" value="UniProtKB-SubCell"/>
</dbReference>
<dbReference type="InterPro" id="IPR022493">
    <property type="entry name" value="CHP03716_TM_YkoY"/>
</dbReference>
<dbReference type="InterPro" id="IPR005496">
    <property type="entry name" value="Integral_membrane_TerC"/>
</dbReference>
<dbReference type="InterPro" id="IPR036259">
    <property type="entry name" value="MFS_trans_sf"/>
</dbReference>
<dbReference type="NCBIfam" id="TIGR03716">
    <property type="entry name" value="R_switched_YkoY"/>
    <property type="match status" value="1"/>
</dbReference>
<dbReference type="PANTHER" id="PTHR30238">
    <property type="entry name" value="MEMBRANE BOUND PREDICTED REDOX MODULATOR"/>
    <property type="match status" value="1"/>
</dbReference>
<dbReference type="PANTHER" id="PTHR30238:SF4">
    <property type="entry name" value="SLL1022 PROTEIN"/>
    <property type="match status" value="1"/>
</dbReference>
<dbReference type="Pfam" id="PF03741">
    <property type="entry name" value="TerC"/>
    <property type="match status" value="1"/>
</dbReference>
<dbReference type="SUPFAM" id="SSF103473">
    <property type="entry name" value="MFS general substrate transporter"/>
    <property type="match status" value="1"/>
</dbReference>
<organism>
    <name type="scientific">Bacillus subtilis (strain 168)</name>
    <dbReference type="NCBI Taxonomy" id="224308"/>
    <lineage>
        <taxon>Bacteria</taxon>
        <taxon>Bacillati</taxon>
        <taxon>Bacillota</taxon>
        <taxon>Bacilli</taxon>
        <taxon>Bacillales</taxon>
        <taxon>Bacillaceae</taxon>
        <taxon>Bacillus</taxon>
    </lineage>
</organism>
<gene>
    <name type="primary">ykoY</name>
    <name type="ordered locus">BSU13440</name>
</gene>